<dbReference type="EMBL" id="CP000083">
    <property type="protein sequence ID" value="AAZ25288.1"/>
    <property type="molecule type" value="Genomic_DNA"/>
</dbReference>
<dbReference type="RefSeq" id="WP_011044436.1">
    <property type="nucleotide sequence ID" value="NC_003910.7"/>
</dbReference>
<dbReference type="SMR" id="Q47XX0"/>
<dbReference type="STRING" id="167879.CPS_3682"/>
<dbReference type="KEGG" id="cps:CPS_3682"/>
<dbReference type="HOGENOM" id="CLU_030805_9_1_6"/>
<dbReference type="Proteomes" id="UP000000547">
    <property type="component" value="Chromosome"/>
</dbReference>
<dbReference type="CDD" id="cd00885">
    <property type="entry name" value="cinA"/>
    <property type="match status" value="1"/>
</dbReference>
<dbReference type="Gene3D" id="3.90.950.20">
    <property type="entry name" value="CinA-like"/>
    <property type="match status" value="1"/>
</dbReference>
<dbReference type="Gene3D" id="3.40.980.10">
    <property type="entry name" value="MoaB/Mog-like domain"/>
    <property type="match status" value="1"/>
</dbReference>
<dbReference type="HAMAP" id="MF_00226_B">
    <property type="entry name" value="CinA_B"/>
    <property type="match status" value="1"/>
</dbReference>
<dbReference type="InterPro" id="IPR050101">
    <property type="entry name" value="CinA"/>
</dbReference>
<dbReference type="InterPro" id="IPR036653">
    <property type="entry name" value="CinA-like_C"/>
</dbReference>
<dbReference type="InterPro" id="IPR008136">
    <property type="entry name" value="CinA_C"/>
</dbReference>
<dbReference type="InterPro" id="IPR008135">
    <property type="entry name" value="Competence-induced_CinA"/>
</dbReference>
<dbReference type="InterPro" id="IPR036425">
    <property type="entry name" value="MoaB/Mog-like_dom_sf"/>
</dbReference>
<dbReference type="InterPro" id="IPR001453">
    <property type="entry name" value="MoaB/Mog_dom"/>
</dbReference>
<dbReference type="NCBIfam" id="TIGR00200">
    <property type="entry name" value="cinA_nterm"/>
    <property type="match status" value="1"/>
</dbReference>
<dbReference type="NCBIfam" id="TIGR00199">
    <property type="entry name" value="PncC_domain"/>
    <property type="match status" value="1"/>
</dbReference>
<dbReference type="PANTHER" id="PTHR13939">
    <property type="entry name" value="NICOTINAMIDE-NUCLEOTIDE AMIDOHYDROLASE PNCC"/>
    <property type="match status" value="1"/>
</dbReference>
<dbReference type="PANTHER" id="PTHR13939:SF0">
    <property type="entry name" value="NMN AMIDOHYDROLASE-LIKE PROTEIN YFAY"/>
    <property type="match status" value="1"/>
</dbReference>
<dbReference type="Pfam" id="PF02464">
    <property type="entry name" value="CinA"/>
    <property type="match status" value="1"/>
</dbReference>
<dbReference type="Pfam" id="PF00994">
    <property type="entry name" value="MoCF_biosynth"/>
    <property type="match status" value="1"/>
</dbReference>
<dbReference type="PIRSF" id="PIRSF006728">
    <property type="entry name" value="CinA"/>
    <property type="match status" value="1"/>
</dbReference>
<dbReference type="SMART" id="SM00852">
    <property type="entry name" value="MoCF_biosynth"/>
    <property type="match status" value="1"/>
</dbReference>
<dbReference type="SUPFAM" id="SSF142433">
    <property type="entry name" value="CinA-like"/>
    <property type="match status" value="1"/>
</dbReference>
<dbReference type="SUPFAM" id="SSF53218">
    <property type="entry name" value="Molybdenum cofactor biosynthesis proteins"/>
    <property type="match status" value="1"/>
</dbReference>
<organism>
    <name type="scientific">Colwellia psychrerythraea (strain 34H / ATCC BAA-681)</name>
    <name type="common">Vibrio psychroerythus</name>
    <dbReference type="NCBI Taxonomy" id="167879"/>
    <lineage>
        <taxon>Bacteria</taxon>
        <taxon>Pseudomonadati</taxon>
        <taxon>Pseudomonadota</taxon>
        <taxon>Gammaproteobacteria</taxon>
        <taxon>Alteromonadales</taxon>
        <taxon>Colwelliaceae</taxon>
        <taxon>Colwellia</taxon>
    </lineage>
</organism>
<proteinExistence type="inferred from homology"/>
<sequence length="432" mass="46847">MSAPKVQLLLTGNELMTGDIVDSNSAMMAQVLKDIGLGVNRKVTVADDLALLVNEITYMASTSDILIINGGLGPTVDDLTAQALALAIEDELSQHPQALTHLTNWCHQRGAELNGPNLKQAILPKSCQIIANKNGSAVGFYVRFNHCDIYCTPGVPHELETMLIKQIVPAISADLPSDLITDVTRLQVFGLGESSLQKIINEQLPQWPTAIDLGFRAGMPLLEVKLTTNTKKGLALKPIWHNKLADVLGDHLISEIQDKPKSLAEHLLHQLQQHNLKVTTAESCTGGLIASKLTEISGSSMNFEAGYVTYSNKMKTAMLDVPAKLFEQYGAVSEQVVVAMAKGSLIKSTADLTIAVSGVAGPNGGTEEKPVGTVWLAWGSIDNIKTQCLLLPYKRVKFQEFVAAIGLDLLRRYQQNITSIPNYIAERAFTDQ</sequence>
<gene>
    <name type="ordered locus">CPS_3682</name>
</gene>
<evidence type="ECO:0000255" key="1">
    <source>
        <dbReference type="HAMAP-Rule" id="MF_00226"/>
    </source>
</evidence>
<comment type="similarity">
    <text evidence="1">Belongs to the CinA family.</text>
</comment>
<protein>
    <recommendedName>
        <fullName evidence="1">CinA-like protein</fullName>
    </recommendedName>
</protein>
<feature type="chain" id="PRO_0000336500" description="CinA-like protein">
    <location>
        <begin position="1"/>
        <end position="432"/>
    </location>
</feature>
<accession>Q47XX0</accession>
<reference key="1">
    <citation type="journal article" date="2005" name="Proc. Natl. Acad. Sci. U.S.A.">
        <title>The psychrophilic lifestyle as revealed by the genome sequence of Colwellia psychrerythraea 34H through genomic and proteomic analyses.</title>
        <authorList>
            <person name="Methe B.A."/>
            <person name="Nelson K.E."/>
            <person name="Deming J.W."/>
            <person name="Momen B."/>
            <person name="Melamud E."/>
            <person name="Zhang X."/>
            <person name="Moult J."/>
            <person name="Madupu R."/>
            <person name="Nelson W.C."/>
            <person name="Dodson R.J."/>
            <person name="Brinkac L.M."/>
            <person name="Daugherty S.C."/>
            <person name="Durkin A.S."/>
            <person name="DeBoy R.T."/>
            <person name="Kolonay J.F."/>
            <person name="Sullivan S.A."/>
            <person name="Zhou L."/>
            <person name="Davidsen T.M."/>
            <person name="Wu M."/>
            <person name="Huston A.L."/>
            <person name="Lewis M."/>
            <person name="Weaver B."/>
            <person name="Weidman J.F."/>
            <person name="Khouri H."/>
            <person name="Utterback T.R."/>
            <person name="Feldblyum T.V."/>
            <person name="Fraser C.M."/>
        </authorList>
    </citation>
    <scope>NUCLEOTIDE SEQUENCE [LARGE SCALE GENOMIC DNA]</scope>
    <source>
        <strain>34H / ATCC BAA-681</strain>
    </source>
</reference>
<name>CINAL_COLP3</name>